<accession>P77263</accession>
<accession>Q2MCD3</accession>
<proteinExistence type="inferred from homology"/>
<dbReference type="EMBL" id="U73857">
    <property type="protein sequence ID" value="AAB18018.1"/>
    <property type="status" value="ALT_INIT"/>
    <property type="molecule type" value="Genomic_DNA"/>
</dbReference>
<dbReference type="EMBL" id="U00096">
    <property type="protein sequence ID" value="AAC73392.2"/>
    <property type="molecule type" value="Genomic_DNA"/>
</dbReference>
<dbReference type="EMBL" id="AP009048">
    <property type="protein sequence ID" value="BAE76073.1"/>
    <property type="molecule type" value="Genomic_DNA"/>
</dbReference>
<dbReference type="PIR" id="A64755">
    <property type="entry name" value="A64755"/>
</dbReference>
<dbReference type="RefSeq" id="NP_414823.2">
    <property type="nucleotide sequence ID" value="NC_000913.3"/>
</dbReference>
<dbReference type="RefSeq" id="WP_001350485.1">
    <property type="nucleotide sequence ID" value="NZ_SSUW01000013.1"/>
</dbReference>
<dbReference type="SMR" id="P77263"/>
<dbReference type="BioGRID" id="4259789">
    <property type="interactions" value="8"/>
</dbReference>
<dbReference type="FunCoup" id="P77263">
    <property type="interactions" value="29"/>
</dbReference>
<dbReference type="STRING" id="511145.b0289"/>
<dbReference type="PaxDb" id="511145-b0289"/>
<dbReference type="EnsemblBacteria" id="AAC73392">
    <property type="protein sequence ID" value="AAC73392"/>
    <property type="gene ID" value="b0289"/>
</dbReference>
<dbReference type="GeneID" id="946631"/>
<dbReference type="KEGG" id="ecj:JW5030"/>
<dbReference type="KEGG" id="eco:b0289"/>
<dbReference type="KEGG" id="ecoc:C3026_01410"/>
<dbReference type="KEGG" id="ecoc:C3026_24040"/>
<dbReference type="PATRIC" id="fig|511145.12.peg.293"/>
<dbReference type="EchoBASE" id="EB3331"/>
<dbReference type="eggNOG" id="COG3121">
    <property type="taxonomic scope" value="Bacteria"/>
</dbReference>
<dbReference type="HOGENOM" id="CLU_106652_0_0_6"/>
<dbReference type="InParanoid" id="P77263"/>
<dbReference type="OMA" id="REVQFKW"/>
<dbReference type="OrthoDB" id="5586837at2"/>
<dbReference type="BioCyc" id="EcoCyc:G6160-MONOMER"/>
<dbReference type="PRO" id="PR:P77263"/>
<dbReference type="Proteomes" id="UP000000625">
    <property type="component" value="Chromosome"/>
</dbReference>
<dbReference type="Gene3D" id="2.60.40.10">
    <property type="entry name" value="Immunoglobulins"/>
    <property type="match status" value="1"/>
</dbReference>
<dbReference type="InterPro" id="IPR013783">
    <property type="entry name" value="Ig-like_fold"/>
</dbReference>
<dbReference type="InterPro" id="IPR008962">
    <property type="entry name" value="PapD-like_sf"/>
</dbReference>
<dbReference type="SUPFAM" id="SSF49354">
    <property type="entry name" value="PapD-like"/>
    <property type="match status" value="1"/>
</dbReference>
<organism>
    <name type="scientific">Escherichia coli (strain K12)</name>
    <dbReference type="NCBI Taxonomy" id="83333"/>
    <lineage>
        <taxon>Bacteria</taxon>
        <taxon>Pseudomonadati</taxon>
        <taxon>Pseudomonadota</taxon>
        <taxon>Gammaproteobacteria</taxon>
        <taxon>Enterobacterales</taxon>
        <taxon>Enterobacteriaceae</taxon>
        <taxon>Escherichia</taxon>
    </lineage>
</organism>
<evidence type="ECO:0000250" key="1"/>
<evidence type="ECO:0000255" key="2"/>
<evidence type="ECO:0000305" key="3"/>
<evidence type="ECO:0000305" key="4">
    <source>
    </source>
</evidence>
<comment type="function">
    <text evidence="1">Part of the ecpRABCDE operon, which encodes the E.coli common pilus (ECP). ECP is found in both commensal and pathogenic strains and plays a dual role in early-stage biofilm development and host cell recognition (By similarity).</text>
</comment>
<comment type="induction">
    <text evidence="1">Negatively regulated by H-NS. Positively regulated by IHF and EcpR (By similarity).</text>
</comment>
<comment type="miscellaneous">
    <text evidence="4">Not expressed under classical laboratory conditions, but is functional when constitutively expressed.</text>
</comment>
<comment type="similarity">
    <text evidence="3">Belongs to the EcpB/EcpE family.</text>
</comment>
<comment type="sequence caution" evidence="3">
    <conflict type="erroneous initiation">
        <sequence resource="EMBL-CDS" id="AAB18018"/>
    </conflict>
    <text>Extended N-terminus.</text>
</comment>
<reference key="1">
    <citation type="submission" date="1997-01" db="EMBL/GenBank/DDBJ databases">
        <title>Sequence of minutes 4-25 of Escherichia coli.</title>
        <authorList>
            <person name="Chung E."/>
            <person name="Allen E."/>
            <person name="Araujo R."/>
            <person name="Aparicio A.M."/>
            <person name="Davis K."/>
            <person name="Duncan M."/>
            <person name="Federspiel N."/>
            <person name="Hyman R."/>
            <person name="Kalman S."/>
            <person name="Komp C."/>
            <person name="Kurdi O."/>
            <person name="Lew H."/>
            <person name="Lin D."/>
            <person name="Namath A."/>
            <person name="Oefner P."/>
            <person name="Roberts D."/>
            <person name="Schramm S."/>
            <person name="Davis R.W."/>
        </authorList>
    </citation>
    <scope>NUCLEOTIDE SEQUENCE [LARGE SCALE GENOMIC DNA]</scope>
    <source>
        <strain>K12 / MG1655 / ATCC 47076</strain>
    </source>
</reference>
<reference key="2">
    <citation type="journal article" date="1997" name="Science">
        <title>The complete genome sequence of Escherichia coli K-12.</title>
        <authorList>
            <person name="Blattner F.R."/>
            <person name="Plunkett G. III"/>
            <person name="Bloch C.A."/>
            <person name="Perna N.T."/>
            <person name="Burland V."/>
            <person name="Riley M."/>
            <person name="Collado-Vides J."/>
            <person name="Glasner J.D."/>
            <person name="Rode C.K."/>
            <person name="Mayhew G.F."/>
            <person name="Gregor J."/>
            <person name="Davis N.W."/>
            <person name="Kirkpatrick H.A."/>
            <person name="Goeden M.A."/>
            <person name="Rose D.J."/>
            <person name="Mau B."/>
            <person name="Shao Y."/>
        </authorList>
    </citation>
    <scope>NUCLEOTIDE SEQUENCE [LARGE SCALE GENOMIC DNA]</scope>
    <source>
        <strain>K12 / MG1655 / ATCC 47076</strain>
    </source>
</reference>
<reference key="3">
    <citation type="journal article" date="2006" name="Mol. Syst. Biol.">
        <title>Highly accurate genome sequences of Escherichia coli K-12 strains MG1655 and W3110.</title>
        <authorList>
            <person name="Hayashi K."/>
            <person name="Morooka N."/>
            <person name="Yamamoto Y."/>
            <person name="Fujita K."/>
            <person name="Isono K."/>
            <person name="Choi S."/>
            <person name="Ohtsubo E."/>
            <person name="Baba T."/>
            <person name="Wanner B.L."/>
            <person name="Mori H."/>
            <person name="Horiuchi T."/>
        </authorList>
    </citation>
    <scope>NUCLEOTIDE SEQUENCE [LARGE SCALE GENOMIC DNA]</scope>
    <source>
        <strain>K12 / W3110 / ATCC 27325 / DSM 5911</strain>
    </source>
</reference>
<reference key="4">
    <citation type="journal article" date="2010" name="Microbiology">
        <title>Mat fimbriae promote biofilm formation by meningitis-associated Escherichia coli.</title>
        <authorList>
            <person name="Lehti T.A."/>
            <person name="Bauchart P."/>
            <person name="Heikkinen J."/>
            <person name="Hacker J."/>
            <person name="Korhonen T.K."/>
            <person name="Dobrindt U."/>
            <person name="Westerlund-Wikstrom B."/>
        </authorList>
    </citation>
    <scope>EXPRESSION</scope>
    <source>
        <strain>K12</strain>
    </source>
</reference>
<gene>
    <name type="primary">ecpE</name>
    <name type="synonym">matF</name>
    <name type="synonym">yagV</name>
    <name type="ordered locus">b0289</name>
    <name type="ordered locus">JW5030</name>
</gene>
<keyword id="KW-0143">Chaperone</keyword>
<keyword id="KW-1029">Fimbrium biogenesis</keyword>
<keyword id="KW-1185">Reference proteome</keyword>
<keyword id="KW-0732">Signal</keyword>
<name>ECPE_ECOLI</name>
<sequence>MFRRRGVTLTKALLTAVCMLAAPLTQAISVGNLTFSLPSETDFVSKRVVNNNKSARIYRIAISAIDSPGSSELRTRPVDGELLFAPRQLALQAGESEYFKFYYHGPRDNRERYYRVSFREVPTRNHTRRSPTGGVVSTEPVVVMDTILVVRPRQVQFKWSFDKVTGTVSNTGNTWFKLLIKPGCDSTEEEGDAWYLRPGDVVHQPELRQPGNHYLVYNDKFIKISDSCPAKPPSAD</sequence>
<protein>
    <recommendedName>
        <fullName>Probable fimbrial chaperone EcpE</fullName>
    </recommendedName>
</protein>
<feature type="signal peptide" evidence="2">
    <location>
        <begin position="1"/>
        <end position="27"/>
    </location>
</feature>
<feature type="chain" id="PRO_0000013787" description="Probable fimbrial chaperone EcpE">
    <location>
        <begin position="28"/>
        <end position="236"/>
    </location>
</feature>